<feature type="chain" id="PRO_1000003599" description="Small ribosomal subunit protein bS18">
    <location>
        <begin position="1"/>
        <end position="75"/>
    </location>
</feature>
<evidence type="ECO:0000255" key="1">
    <source>
        <dbReference type="HAMAP-Rule" id="MF_00270"/>
    </source>
</evidence>
<evidence type="ECO:0000305" key="2"/>
<keyword id="KW-1185">Reference proteome</keyword>
<keyword id="KW-0687">Ribonucleoprotein</keyword>
<keyword id="KW-0689">Ribosomal protein</keyword>
<keyword id="KW-0694">RNA-binding</keyword>
<keyword id="KW-0699">rRNA-binding</keyword>
<proteinExistence type="inferred from homology"/>
<gene>
    <name evidence="1" type="primary">rpsR</name>
    <name type="ordered locus">Sama_3062</name>
</gene>
<protein>
    <recommendedName>
        <fullName evidence="1">Small ribosomal subunit protein bS18</fullName>
    </recommendedName>
    <alternativeName>
        <fullName evidence="2">30S ribosomal protein S18</fullName>
    </alternativeName>
</protein>
<accession>A1SA58</accession>
<name>RS18_SHEAM</name>
<dbReference type="EMBL" id="CP000507">
    <property type="protein sequence ID" value="ABM01265.1"/>
    <property type="molecule type" value="Genomic_DNA"/>
</dbReference>
<dbReference type="RefSeq" id="WP_011761169.1">
    <property type="nucleotide sequence ID" value="NC_008700.1"/>
</dbReference>
<dbReference type="SMR" id="A1SA58"/>
<dbReference type="STRING" id="326297.Sama_3062"/>
<dbReference type="KEGG" id="saz:Sama_3062"/>
<dbReference type="eggNOG" id="COG0238">
    <property type="taxonomic scope" value="Bacteria"/>
</dbReference>
<dbReference type="HOGENOM" id="CLU_148710_2_2_6"/>
<dbReference type="OrthoDB" id="9812008at2"/>
<dbReference type="Proteomes" id="UP000009175">
    <property type="component" value="Chromosome"/>
</dbReference>
<dbReference type="GO" id="GO:0022627">
    <property type="term" value="C:cytosolic small ribosomal subunit"/>
    <property type="evidence" value="ECO:0007669"/>
    <property type="project" value="TreeGrafter"/>
</dbReference>
<dbReference type="GO" id="GO:0070181">
    <property type="term" value="F:small ribosomal subunit rRNA binding"/>
    <property type="evidence" value="ECO:0007669"/>
    <property type="project" value="TreeGrafter"/>
</dbReference>
<dbReference type="GO" id="GO:0003735">
    <property type="term" value="F:structural constituent of ribosome"/>
    <property type="evidence" value="ECO:0007669"/>
    <property type="project" value="InterPro"/>
</dbReference>
<dbReference type="GO" id="GO:0006412">
    <property type="term" value="P:translation"/>
    <property type="evidence" value="ECO:0007669"/>
    <property type="project" value="UniProtKB-UniRule"/>
</dbReference>
<dbReference type="FunFam" id="4.10.640.10:FF:000001">
    <property type="entry name" value="30S ribosomal protein S18"/>
    <property type="match status" value="1"/>
</dbReference>
<dbReference type="Gene3D" id="4.10.640.10">
    <property type="entry name" value="Ribosomal protein S18"/>
    <property type="match status" value="1"/>
</dbReference>
<dbReference type="HAMAP" id="MF_00270">
    <property type="entry name" value="Ribosomal_bS18"/>
    <property type="match status" value="1"/>
</dbReference>
<dbReference type="InterPro" id="IPR001648">
    <property type="entry name" value="Ribosomal_bS18"/>
</dbReference>
<dbReference type="InterPro" id="IPR018275">
    <property type="entry name" value="Ribosomal_bS18_CS"/>
</dbReference>
<dbReference type="InterPro" id="IPR036870">
    <property type="entry name" value="Ribosomal_bS18_sf"/>
</dbReference>
<dbReference type="NCBIfam" id="TIGR00165">
    <property type="entry name" value="S18"/>
    <property type="match status" value="1"/>
</dbReference>
<dbReference type="PANTHER" id="PTHR13479">
    <property type="entry name" value="30S RIBOSOMAL PROTEIN S18"/>
    <property type="match status" value="1"/>
</dbReference>
<dbReference type="PANTHER" id="PTHR13479:SF40">
    <property type="entry name" value="SMALL RIBOSOMAL SUBUNIT PROTEIN BS18M"/>
    <property type="match status" value="1"/>
</dbReference>
<dbReference type="Pfam" id="PF01084">
    <property type="entry name" value="Ribosomal_S18"/>
    <property type="match status" value="1"/>
</dbReference>
<dbReference type="PRINTS" id="PR00974">
    <property type="entry name" value="RIBOSOMALS18"/>
</dbReference>
<dbReference type="SUPFAM" id="SSF46911">
    <property type="entry name" value="Ribosomal protein S18"/>
    <property type="match status" value="1"/>
</dbReference>
<dbReference type="PROSITE" id="PS00057">
    <property type="entry name" value="RIBOSOMAL_S18"/>
    <property type="match status" value="1"/>
</dbReference>
<sequence>MARYFRRRKFCRFTAEGVAEIDYKDIATLKNYITESGKIVPSRITGTSAKYQRQLARAIKRARYLSLLPYTDLHQ</sequence>
<organism>
    <name type="scientific">Shewanella amazonensis (strain ATCC BAA-1098 / SB2B)</name>
    <dbReference type="NCBI Taxonomy" id="326297"/>
    <lineage>
        <taxon>Bacteria</taxon>
        <taxon>Pseudomonadati</taxon>
        <taxon>Pseudomonadota</taxon>
        <taxon>Gammaproteobacteria</taxon>
        <taxon>Alteromonadales</taxon>
        <taxon>Shewanellaceae</taxon>
        <taxon>Shewanella</taxon>
    </lineage>
</organism>
<reference key="1">
    <citation type="submission" date="2006-12" db="EMBL/GenBank/DDBJ databases">
        <title>Complete sequence of Shewanella amazonensis SB2B.</title>
        <authorList>
            <consortium name="US DOE Joint Genome Institute"/>
            <person name="Copeland A."/>
            <person name="Lucas S."/>
            <person name="Lapidus A."/>
            <person name="Barry K."/>
            <person name="Detter J.C."/>
            <person name="Glavina del Rio T."/>
            <person name="Hammon N."/>
            <person name="Israni S."/>
            <person name="Dalin E."/>
            <person name="Tice H."/>
            <person name="Pitluck S."/>
            <person name="Munk A.C."/>
            <person name="Brettin T."/>
            <person name="Bruce D."/>
            <person name="Han C."/>
            <person name="Tapia R."/>
            <person name="Gilna P."/>
            <person name="Schmutz J."/>
            <person name="Larimer F."/>
            <person name="Land M."/>
            <person name="Hauser L."/>
            <person name="Kyrpides N."/>
            <person name="Mikhailova N."/>
            <person name="Fredrickson J."/>
            <person name="Richardson P."/>
        </authorList>
    </citation>
    <scope>NUCLEOTIDE SEQUENCE [LARGE SCALE GENOMIC DNA]</scope>
    <source>
        <strain>ATCC BAA-1098 / SB2B</strain>
    </source>
</reference>
<comment type="function">
    <text evidence="1">Binds as a heterodimer with protein bS6 to the central domain of the 16S rRNA, where it helps stabilize the platform of the 30S subunit.</text>
</comment>
<comment type="subunit">
    <text evidence="1">Part of the 30S ribosomal subunit. Forms a tight heterodimer with protein bS6.</text>
</comment>
<comment type="similarity">
    <text evidence="1">Belongs to the bacterial ribosomal protein bS18 family.</text>
</comment>